<evidence type="ECO:0000255" key="1">
    <source>
        <dbReference type="HAMAP-Rule" id="MF_00145"/>
    </source>
</evidence>
<accession>Q65W08</accession>
<proteinExistence type="inferred from homology"/>
<sequence length="389" mass="41241">MSVIKMTDLDLAGKRLFIRADLNVPVKDGKVTSDARIRATIPTLKLALEKGAKVMVTSHLGRPTEGEFKPEDSLQPVVDYLKDAGFNVRLAQNYLDGVEVNEGEIVVLENVRINKGEKKNDPELGKKYAALCDVFVMDAFGTAHRAQASTYGVAEYAPVACAGPLLAAELDALGKALKEPQRPMLAIVGGSKVSTKLTVLDSLSKIADQLIVGGGIANTFIAAEGHNVGKSLYEEDLIPEAKRLAAATNIPVPVDVRVGTEFSENAPATEKSVTEVQADESIFDIGDKSAEELAKIIKSAKTILWNGPVGVFEFPNFRKGTEVISNAIAEATANGAFSIAGGGDTLAAIDLFGIKDKISYISTGGGAFLEFVEGKVLPAVEILEKRANG</sequence>
<comment type="catalytic activity">
    <reaction evidence="1">
        <text>(2R)-3-phosphoglycerate + ATP = (2R)-3-phospho-glyceroyl phosphate + ADP</text>
        <dbReference type="Rhea" id="RHEA:14801"/>
        <dbReference type="ChEBI" id="CHEBI:30616"/>
        <dbReference type="ChEBI" id="CHEBI:57604"/>
        <dbReference type="ChEBI" id="CHEBI:58272"/>
        <dbReference type="ChEBI" id="CHEBI:456216"/>
        <dbReference type="EC" id="2.7.2.3"/>
    </reaction>
</comment>
<comment type="pathway">
    <text evidence="1">Carbohydrate degradation; glycolysis; pyruvate from D-glyceraldehyde 3-phosphate: step 2/5.</text>
</comment>
<comment type="subunit">
    <text evidence="1">Monomer.</text>
</comment>
<comment type="subcellular location">
    <subcellularLocation>
        <location evidence="1">Cytoplasm</location>
    </subcellularLocation>
</comment>
<comment type="similarity">
    <text evidence="1">Belongs to the phosphoglycerate kinase family.</text>
</comment>
<feature type="chain" id="PRO_1000058011" description="Phosphoglycerate kinase">
    <location>
        <begin position="1"/>
        <end position="389"/>
    </location>
</feature>
<feature type="binding site" evidence="1">
    <location>
        <begin position="21"/>
        <end position="23"/>
    </location>
    <ligand>
        <name>substrate</name>
    </ligand>
</feature>
<feature type="binding site" evidence="1">
    <location>
        <position position="36"/>
    </location>
    <ligand>
        <name>substrate</name>
    </ligand>
</feature>
<feature type="binding site" evidence="1">
    <location>
        <begin position="59"/>
        <end position="62"/>
    </location>
    <ligand>
        <name>substrate</name>
    </ligand>
</feature>
<feature type="binding site" evidence="1">
    <location>
        <position position="112"/>
    </location>
    <ligand>
        <name>substrate</name>
    </ligand>
</feature>
<feature type="binding site" evidence="1">
    <location>
        <position position="145"/>
    </location>
    <ligand>
        <name>substrate</name>
    </ligand>
</feature>
<feature type="binding site" evidence="1">
    <location>
        <position position="196"/>
    </location>
    <ligand>
        <name>ATP</name>
        <dbReference type="ChEBI" id="CHEBI:30616"/>
    </ligand>
</feature>
<feature type="binding site" evidence="1">
    <location>
        <position position="313"/>
    </location>
    <ligand>
        <name>ATP</name>
        <dbReference type="ChEBI" id="CHEBI:30616"/>
    </ligand>
</feature>
<feature type="binding site" evidence="1">
    <location>
        <begin position="342"/>
        <end position="345"/>
    </location>
    <ligand>
        <name>ATP</name>
        <dbReference type="ChEBI" id="CHEBI:30616"/>
    </ligand>
</feature>
<name>PGK_MANSM</name>
<dbReference type="EC" id="2.7.2.3" evidence="1"/>
<dbReference type="EMBL" id="AE016827">
    <property type="protein sequence ID" value="AAU36852.1"/>
    <property type="molecule type" value="Genomic_DNA"/>
</dbReference>
<dbReference type="RefSeq" id="WP_011199427.1">
    <property type="nucleotide sequence ID" value="NC_006300.1"/>
</dbReference>
<dbReference type="SMR" id="Q65W08"/>
<dbReference type="STRING" id="221988.MS0245"/>
<dbReference type="KEGG" id="msu:MS0245"/>
<dbReference type="eggNOG" id="COG0126">
    <property type="taxonomic scope" value="Bacteria"/>
</dbReference>
<dbReference type="HOGENOM" id="CLU_025427_0_2_6"/>
<dbReference type="OrthoDB" id="9808460at2"/>
<dbReference type="UniPathway" id="UPA00109">
    <property type="reaction ID" value="UER00185"/>
</dbReference>
<dbReference type="Proteomes" id="UP000000607">
    <property type="component" value="Chromosome"/>
</dbReference>
<dbReference type="GO" id="GO:0005829">
    <property type="term" value="C:cytosol"/>
    <property type="evidence" value="ECO:0007669"/>
    <property type="project" value="TreeGrafter"/>
</dbReference>
<dbReference type="GO" id="GO:0043531">
    <property type="term" value="F:ADP binding"/>
    <property type="evidence" value="ECO:0007669"/>
    <property type="project" value="TreeGrafter"/>
</dbReference>
<dbReference type="GO" id="GO:0005524">
    <property type="term" value="F:ATP binding"/>
    <property type="evidence" value="ECO:0007669"/>
    <property type="project" value="UniProtKB-KW"/>
</dbReference>
<dbReference type="GO" id="GO:0004618">
    <property type="term" value="F:phosphoglycerate kinase activity"/>
    <property type="evidence" value="ECO:0007669"/>
    <property type="project" value="UniProtKB-UniRule"/>
</dbReference>
<dbReference type="GO" id="GO:0006094">
    <property type="term" value="P:gluconeogenesis"/>
    <property type="evidence" value="ECO:0007669"/>
    <property type="project" value="TreeGrafter"/>
</dbReference>
<dbReference type="GO" id="GO:0006096">
    <property type="term" value="P:glycolytic process"/>
    <property type="evidence" value="ECO:0007669"/>
    <property type="project" value="UniProtKB-UniRule"/>
</dbReference>
<dbReference type="FunFam" id="3.40.50.1260:FF:000001">
    <property type="entry name" value="Phosphoglycerate kinase"/>
    <property type="match status" value="1"/>
</dbReference>
<dbReference type="FunFam" id="3.40.50.1260:FF:000002">
    <property type="entry name" value="Phosphoglycerate kinase"/>
    <property type="match status" value="1"/>
</dbReference>
<dbReference type="Gene3D" id="3.40.50.1260">
    <property type="entry name" value="Phosphoglycerate kinase, N-terminal domain"/>
    <property type="match status" value="2"/>
</dbReference>
<dbReference type="HAMAP" id="MF_00145">
    <property type="entry name" value="Phosphoglyc_kinase"/>
    <property type="match status" value="1"/>
</dbReference>
<dbReference type="InterPro" id="IPR001576">
    <property type="entry name" value="Phosphoglycerate_kinase"/>
</dbReference>
<dbReference type="InterPro" id="IPR015824">
    <property type="entry name" value="Phosphoglycerate_kinase_N"/>
</dbReference>
<dbReference type="InterPro" id="IPR036043">
    <property type="entry name" value="Phosphoglycerate_kinase_sf"/>
</dbReference>
<dbReference type="PANTHER" id="PTHR11406">
    <property type="entry name" value="PHOSPHOGLYCERATE KINASE"/>
    <property type="match status" value="1"/>
</dbReference>
<dbReference type="PANTHER" id="PTHR11406:SF23">
    <property type="entry name" value="PHOSPHOGLYCERATE KINASE 1, CHLOROPLASTIC-RELATED"/>
    <property type="match status" value="1"/>
</dbReference>
<dbReference type="Pfam" id="PF00162">
    <property type="entry name" value="PGK"/>
    <property type="match status" value="1"/>
</dbReference>
<dbReference type="PIRSF" id="PIRSF000724">
    <property type="entry name" value="Pgk"/>
    <property type="match status" value="1"/>
</dbReference>
<dbReference type="PRINTS" id="PR00477">
    <property type="entry name" value="PHGLYCKINASE"/>
</dbReference>
<dbReference type="SUPFAM" id="SSF53748">
    <property type="entry name" value="Phosphoglycerate kinase"/>
    <property type="match status" value="1"/>
</dbReference>
<reference key="1">
    <citation type="journal article" date="2004" name="Nat. Biotechnol.">
        <title>The genome sequence of the capnophilic rumen bacterium Mannheimia succiniciproducens.</title>
        <authorList>
            <person name="Hong S.H."/>
            <person name="Kim J.S."/>
            <person name="Lee S.Y."/>
            <person name="In Y.H."/>
            <person name="Choi S.S."/>
            <person name="Rih J.-K."/>
            <person name="Kim C.H."/>
            <person name="Jeong H."/>
            <person name="Hur C.G."/>
            <person name="Kim J.J."/>
        </authorList>
    </citation>
    <scope>NUCLEOTIDE SEQUENCE [LARGE SCALE GENOMIC DNA]</scope>
    <source>
        <strain>KCTC 0769BP / MBEL55E</strain>
    </source>
</reference>
<organism>
    <name type="scientific">Mannheimia succiniciproducens (strain KCTC 0769BP / MBEL55E)</name>
    <dbReference type="NCBI Taxonomy" id="221988"/>
    <lineage>
        <taxon>Bacteria</taxon>
        <taxon>Pseudomonadati</taxon>
        <taxon>Pseudomonadota</taxon>
        <taxon>Gammaproteobacteria</taxon>
        <taxon>Pasteurellales</taxon>
        <taxon>Pasteurellaceae</taxon>
        <taxon>Basfia</taxon>
    </lineage>
</organism>
<gene>
    <name evidence="1" type="primary">pgk</name>
    <name type="ordered locus">MS0245</name>
</gene>
<protein>
    <recommendedName>
        <fullName evidence="1">Phosphoglycerate kinase</fullName>
        <ecNumber evidence="1">2.7.2.3</ecNumber>
    </recommendedName>
</protein>
<keyword id="KW-0067">ATP-binding</keyword>
<keyword id="KW-0963">Cytoplasm</keyword>
<keyword id="KW-0324">Glycolysis</keyword>
<keyword id="KW-0418">Kinase</keyword>
<keyword id="KW-0547">Nucleotide-binding</keyword>
<keyword id="KW-0808">Transferase</keyword>